<organism>
    <name type="scientific">Vibrio cholerae serotype O1 (strain M66-2)</name>
    <dbReference type="NCBI Taxonomy" id="579112"/>
    <lineage>
        <taxon>Bacteria</taxon>
        <taxon>Pseudomonadati</taxon>
        <taxon>Pseudomonadota</taxon>
        <taxon>Gammaproteobacteria</taxon>
        <taxon>Vibrionales</taxon>
        <taxon>Vibrionaceae</taxon>
        <taxon>Vibrio</taxon>
    </lineage>
</organism>
<comment type="function">
    <text evidence="1">Probably interacts with GlcNAc residues. May promote attachment to both epithelial cell surfaces and chitin.</text>
</comment>
<comment type="subcellular location">
    <subcellularLocation>
        <location evidence="1">Secreted</location>
    </subcellularLocation>
</comment>
<comment type="similarity">
    <text evidence="1">Belongs to the GbpA family.</text>
</comment>
<evidence type="ECO:0000255" key="1">
    <source>
        <dbReference type="HAMAP-Rule" id="MF_01905"/>
    </source>
</evidence>
<feature type="signal peptide" evidence="1">
    <location>
        <begin position="1"/>
        <end position="23"/>
    </location>
</feature>
<feature type="chain" id="PRO_1000188768" description="GlcNAc-binding protein A">
    <location>
        <begin position="24"/>
        <end position="485"/>
    </location>
</feature>
<feature type="domain" description="Chitin-binding type-4" evidence="1">
    <location>
        <begin position="24"/>
        <end position="201"/>
    </location>
</feature>
<feature type="domain" description="Chitin-binding type-3" evidence="1">
    <location>
        <begin position="437"/>
        <end position="478"/>
    </location>
</feature>
<keyword id="KW-0147">Chitin-binding</keyword>
<keyword id="KW-0964">Secreted</keyword>
<keyword id="KW-0732">Signal</keyword>
<reference key="1">
    <citation type="journal article" date="2008" name="PLoS ONE">
        <title>A recalibrated molecular clock and independent origins for the cholera pandemic clones.</title>
        <authorList>
            <person name="Feng L."/>
            <person name="Reeves P.R."/>
            <person name="Lan R."/>
            <person name="Ren Y."/>
            <person name="Gao C."/>
            <person name="Zhou Z."/>
            <person name="Ren Y."/>
            <person name="Cheng J."/>
            <person name="Wang W."/>
            <person name="Wang J."/>
            <person name="Qian W."/>
            <person name="Li D."/>
            <person name="Wang L."/>
        </authorList>
    </citation>
    <scope>NUCLEOTIDE SEQUENCE [LARGE SCALE GENOMIC DNA]</scope>
    <source>
        <strain>M66-2</strain>
    </source>
</reference>
<name>GBPA_VIBCM</name>
<sequence>MKKQPKMTAIALILSGISGLAYGHGYVSAVENGVAEGRVTLCKFAANGTGEKNTHCGAIQYEPQSVEGPDGFPVTGPRDGKIASAESALAAALDEQTADRWVKRPIQAGPQTFEWTFTANHVTKDWKYYITKPNWNPNQPLSRDAFDLNPFCVVEGNMVQPPKRVNHECIVPEREGYQVILAVWDVGDTAASFYNVIDVKFDGNGPVLPDWNPAGQIIPSMDLSIGDTVYTRVFDNEGENPAYRTELKIDSETLTKANQWSYALATKINQTQKQQRAGQLNGDQFVPVYGTNPIYLKEGSGLKSVEIGYQIEAPQPEYSLTVSGLAKEYEIGEQPIQLDLTLEAQGEMSAELTVYNHHQKPLASWSQAMTDGELKSVTLELSEAKAGHHMLVSRIKDRDGNLQDQQTLDFMLVEPQTPPTPGDYDFVFPNGLKEYVAGTKVLASDGAIYQCKPWPYSGYCQQWTSNATQYQPGTGSHWEMAWDKH</sequence>
<gene>
    <name evidence="1" type="primary">gbpA</name>
    <name type="ordered locus">VCM66_A0770</name>
</gene>
<dbReference type="EMBL" id="CP001234">
    <property type="protein sequence ID" value="ACP07730.1"/>
    <property type="molecule type" value="Genomic_DNA"/>
</dbReference>
<dbReference type="RefSeq" id="WP_000744634.1">
    <property type="nucleotide sequence ID" value="NC_012580.1"/>
</dbReference>
<dbReference type="SMR" id="C3LW75"/>
<dbReference type="CAZy" id="AA10">
    <property type="family name" value="Auxiliary Activities 10"/>
</dbReference>
<dbReference type="CAZy" id="CBM73">
    <property type="family name" value="Carbohydrate-Binding Module Family 73"/>
</dbReference>
<dbReference type="KEGG" id="vcm:VCM66_A0770"/>
<dbReference type="HOGENOM" id="CLU_039396_2_0_6"/>
<dbReference type="Proteomes" id="UP000001217">
    <property type="component" value="Chromosome II"/>
</dbReference>
<dbReference type="GO" id="GO:0005576">
    <property type="term" value="C:extracellular region"/>
    <property type="evidence" value="ECO:0007669"/>
    <property type="project" value="UniProtKB-SubCell"/>
</dbReference>
<dbReference type="GO" id="GO:0008061">
    <property type="term" value="F:chitin binding"/>
    <property type="evidence" value="ECO:0007669"/>
    <property type="project" value="UniProtKB-UniRule"/>
</dbReference>
<dbReference type="CDD" id="cd21177">
    <property type="entry name" value="LPMO_AA10"/>
    <property type="match status" value="1"/>
</dbReference>
<dbReference type="FunFam" id="2.70.50.50:FF:000001">
    <property type="entry name" value="Chitin-binding protein"/>
    <property type="match status" value="1"/>
</dbReference>
<dbReference type="FunFam" id="2.60.40.2550:FF:000001">
    <property type="entry name" value="GlcNAc-binding protein A"/>
    <property type="match status" value="1"/>
</dbReference>
<dbReference type="Gene3D" id="2.60.40.2550">
    <property type="match status" value="1"/>
</dbReference>
<dbReference type="Gene3D" id="3.30.70.2150">
    <property type="match status" value="1"/>
</dbReference>
<dbReference type="Gene3D" id="2.70.50.50">
    <property type="entry name" value="chitin-binding protein cbp21"/>
    <property type="match status" value="1"/>
</dbReference>
<dbReference type="HAMAP" id="MF_01905">
    <property type="entry name" value="GbpA"/>
    <property type="match status" value="1"/>
</dbReference>
<dbReference type="InterPro" id="IPR004302">
    <property type="entry name" value="Cellulose/chitin-bd_N"/>
</dbReference>
<dbReference type="InterPro" id="IPR041029">
    <property type="entry name" value="GbpA_2"/>
</dbReference>
<dbReference type="InterPro" id="IPR054063">
    <property type="entry name" value="GbpA_D3"/>
</dbReference>
<dbReference type="InterPro" id="IPR020879">
    <property type="entry name" value="GlcNAc-bd_A"/>
</dbReference>
<dbReference type="InterPro" id="IPR051024">
    <property type="entry name" value="GlcNAc_Chitin_IntDeg"/>
</dbReference>
<dbReference type="InterPro" id="IPR014756">
    <property type="entry name" value="Ig_E-set"/>
</dbReference>
<dbReference type="NCBIfam" id="NF009690">
    <property type="entry name" value="PRK13211.1"/>
    <property type="match status" value="1"/>
</dbReference>
<dbReference type="PANTHER" id="PTHR34823:SF1">
    <property type="entry name" value="CHITIN-BINDING TYPE-4 DOMAIN-CONTAINING PROTEIN"/>
    <property type="match status" value="1"/>
</dbReference>
<dbReference type="PANTHER" id="PTHR34823">
    <property type="entry name" value="GLCNAC-BINDING PROTEIN A"/>
    <property type="match status" value="1"/>
</dbReference>
<dbReference type="Pfam" id="PF18416">
    <property type="entry name" value="GbpA_2"/>
    <property type="match status" value="1"/>
</dbReference>
<dbReference type="Pfam" id="PF21868">
    <property type="entry name" value="GbpA_D3"/>
    <property type="match status" value="1"/>
</dbReference>
<dbReference type="Pfam" id="PF03067">
    <property type="entry name" value="LPMO_10"/>
    <property type="match status" value="1"/>
</dbReference>
<dbReference type="SUPFAM" id="SSF81296">
    <property type="entry name" value="E set domains"/>
    <property type="match status" value="1"/>
</dbReference>
<proteinExistence type="inferred from homology"/>
<protein>
    <recommendedName>
        <fullName evidence="1">GlcNAc-binding protein A</fullName>
    </recommendedName>
</protein>
<accession>C3LW75</accession>